<keyword id="KW-0002">3D-structure</keyword>
<keyword id="KW-0227">DNA damage</keyword>
<keyword id="KW-0234">DNA repair</keyword>
<keyword id="KW-0238">DNA-binding</keyword>
<keyword id="KW-0539">Nucleus</keyword>
<keyword id="KW-1267">Proteomics identification</keyword>
<keyword id="KW-1185">Reference proteome</keyword>
<gene>
    <name evidence="2 3" type="primary">FAAP24</name>
    <name type="synonym">C19orf40</name>
</gene>
<name>FAP24_HUMAN</name>
<reference key="1">
    <citation type="journal article" date="2004" name="Nat. Genet.">
        <title>Complete sequencing and characterization of 21,243 full-length human cDNAs.</title>
        <authorList>
            <person name="Ota T."/>
            <person name="Suzuki Y."/>
            <person name="Nishikawa T."/>
            <person name="Otsuki T."/>
            <person name="Sugiyama T."/>
            <person name="Irie R."/>
            <person name="Wakamatsu A."/>
            <person name="Hayashi K."/>
            <person name="Sato H."/>
            <person name="Nagai K."/>
            <person name="Kimura K."/>
            <person name="Makita H."/>
            <person name="Sekine M."/>
            <person name="Obayashi M."/>
            <person name="Nishi T."/>
            <person name="Shibahara T."/>
            <person name="Tanaka T."/>
            <person name="Ishii S."/>
            <person name="Yamamoto J."/>
            <person name="Saito K."/>
            <person name="Kawai Y."/>
            <person name="Isono Y."/>
            <person name="Nakamura Y."/>
            <person name="Nagahari K."/>
            <person name="Murakami K."/>
            <person name="Yasuda T."/>
            <person name="Iwayanagi T."/>
            <person name="Wagatsuma M."/>
            <person name="Shiratori A."/>
            <person name="Sudo H."/>
            <person name="Hosoiri T."/>
            <person name="Kaku Y."/>
            <person name="Kodaira H."/>
            <person name="Kondo H."/>
            <person name="Sugawara M."/>
            <person name="Takahashi M."/>
            <person name="Kanda K."/>
            <person name="Yokoi T."/>
            <person name="Furuya T."/>
            <person name="Kikkawa E."/>
            <person name="Omura Y."/>
            <person name="Abe K."/>
            <person name="Kamihara K."/>
            <person name="Katsuta N."/>
            <person name="Sato K."/>
            <person name="Tanikawa M."/>
            <person name="Yamazaki M."/>
            <person name="Ninomiya K."/>
            <person name="Ishibashi T."/>
            <person name="Yamashita H."/>
            <person name="Murakawa K."/>
            <person name="Fujimori K."/>
            <person name="Tanai H."/>
            <person name="Kimata M."/>
            <person name="Watanabe M."/>
            <person name="Hiraoka S."/>
            <person name="Chiba Y."/>
            <person name="Ishida S."/>
            <person name="Ono Y."/>
            <person name="Takiguchi S."/>
            <person name="Watanabe S."/>
            <person name="Yosida M."/>
            <person name="Hotuta T."/>
            <person name="Kusano J."/>
            <person name="Kanehori K."/>
            <person name="Takahashi-Fujii A."/>
            <person name="Hara H."/>
            <person name="Tanase T.-O."/>
            <person name="Nomura Y."/>
            <person name="Togiya S."/>
            <person name="Komai F."/>
            <person name="Hara R."/>
            <person name="Takeuchi K."/>
            <person name="Arita M."/>
            <person name="Imose N."/>
            <person name="Musashino K."/>
            <person name="Yuuki H."/>
            <person name="Oshima A."/>
            <person name="Sasaki N."/>
            <person name="Aotsuka S."/>
            <person name="Yoshikawa Y."/>
            <person name="Matsunawa H."/>
            <person name="Ichihara T."/>
            <person name="Shiohata N."/>
            <person name="Sano S."/>
            <person name="Moriya S."/>
            <person name="Momiyama H."/>
            <person name="Satoh N."/>
            <person name="Takami S."/>
            <person name="Terashima Y."/>
            <person name="Suzuki O."/>
            <person name="Nakagawa S."/>
            <person name="Senoh A."/>
            <person name="Mizoguchi H."/>
            <person name="Goto Y."/>
            <person name="Shimizu F."/>
            <person name="Wakebe H."/>
            <person name="Hishigaki H."/>
            <person name="Watanabe T."/>
            <person name="Sugiyama A."/>
            <person name="Takemoto M."/>
            <person name="Kawakami B."/>
            <person name="Yamazaki M."/>
            <person name="Watanabe K."/>
            <person name="Kumagai A."/>
            <person name="Itakura S."/>
            <person name="Fukuzumi Y."/>
            <person name="Fujimori Y."/>
            <person name="Komiyama M."/>
            <person name="Tashiro H."/>
            <person name="Tanigami A."/>
            <person name="Fujiwara T."/>
            <person name="Ono T."/>
            <person name="Yamada K."/>
            <person name="Fujii Y."/>
            <person name="Ozaki K."/>
            <person name="Hirao M."/>
            <person name="Ohmori Y."/>
            <person name="Kawabata A."/>
            <person name="Hikiji T."/>
            <person name="Kobatake N."/>
            <person name="Inagaki H."/>
            <person name="Ikema Y."/>
            <person name="Okamoto S."/>
            <person name="Okitani R."/>
            <person name="Kawakami T."/>
            <person name="Noguchi S."/>
            <person name="Itoh T."/>
            <person name="Shigeta K."/>
            <person name="Senba T."/>
            <person name="Matsumura K."/>
            <person name="Nakajima Y."/>
            <person name="Mizuno T."/>
            <person name="Morinaga M."/>
            <person name="Sasaki M."/>
            <person name="Togashi T."/>
            <person name="Oyama M."/>
            <person name="Hata H."/>
            <person name="Watanabe M."/>
            <person name="Komatsu T."/>
            <person name="Mizushima-Sugano J."/>
            <person name="Satoh T."/>
            <person name="Shirai Y."/>
            <person name="Takahashi Y."/>
            <person name="Nakagawa K."/>
            <person name="Okumura K."/>
            <person name="Nagase T."/>
            <person name="Nomura N."/>
            <person name="Kikuchi H."/>
            <person name="Masuho Y."/>
            <person name="Yamashita R."/>
            <person name="Nakai K."/>
            <person name="Yada T."/>
            <person name="Nakamura Y."/>
            <person name="Ohara O."/>
            <person name="Isogai T."/>
            <person name="Sugano S."/>
        </authorList>
    </citation>
    <scope>NUCLEOTIDE SEQUENCE [LARGE SCALE MRNA]</scope>
    <source>
        <tissue>Uterus</tissue>
    </source>
</reference>
<reference key="2">
    <citation type="journal article" date="2004" name="Genome Res.">
        <title>The status, quality, and expansion of the NIH full-length cDNA project: the Mammalian Gene Collection (MGC).</title>
        <authorList>
            <consortium name="The MGC Project Team"/>
        </authorList>
    </citation>
    <scope>NUCLEOTIDE SEQUENCE [LARGE SCALE MRNA]</scope>
    <source>
        <tissue>Skin</tissue>
        <tissue>Uterus</tissue>
    </source>
</reference>
<reference key="3">
    <citation type="journal article" date="2007" name="Mol. Cell">
        <title>Identification of FAAP24, a Fanconi anemia core complex protein that interacts with FANCM.</title>
        <authorList>
            <person name="Ciccia A."/>
            <person name="Ling C."/>
            <person name="Coulthard R."/>
            <person name="Yan Z."/>
            <person name="Xue Y."/>
            <person name="Meetei A.R."/>
            <person name="Laghmani el H."/>
            <person name="Joenje H."/>
            <person name="McDonald N."/>
            <person name="de Winter J.P."/>
            <person name="Wang W."/>
            <person name="West S.C."/>
        </authorList>
    </citation>
    <scope>FUNCTION</scope>
    <scope>SUBCELLULAR LOCATION</scope>
    <scope>IDENTIFICATION BY MASS SPECTROMETRY</scope>
    <scope>IDENTIFICATION IN THE FA CORE COMPLEX</scope>
</reference>
<evidence type="ECO:0000269" key="1">
    <source>
    </source>
</evidence>
<evidence type="ECO:0000303" key="2">
    <source>
    </source>
</evidence>
<evidence type="ECO:0000312" key="3">
    <source>
        <dbReference type="HGNC" id="HGNC:28467"/>
    </source>
</evidence>
<evidence type="ECO:0007829" key="4">
    <source>
        <dbReference type="PDB" id="2LYH"/>
    </source>
</evidence>
<evidence type="ECO:0007829" key="5">
    <source>
        <dbReference type="PDB" id="2M9M"/>
    </source>
</evidence>
<evidence type="ECO:0007829" key="6">
    <source>
        <dbReference type="PDB" id="4BXO"/>
    </source>
</evidence>
<evidence type="ECO:0007829" key="7">
    <source>
        <dbReference type="PDB" id="4M6W"/>
    </source>
</evidence>
<accession>Q9BTP7</accession>
<accession>B3KY46</accession>
<accession>Q8WUJ7</accession>
<accession>Q96FX6</accession>
<dbReference type="EMBL" id="AK128668">
    <property type="protein sequence ID" value="BAG54708.1"/>
    <property type="molecule type" value="mRNA"/>
</dbReference>
<dbReference type="EMBL" id="BC003535">
    <property type="protein sequence ID" value="AAH03535.2"/>
    <property type="molecule type" value="mRNA"/>
</dbReference>
<dbReference type="EMBL" id="BC010170">
    <property type="protein sequence ID" value="AAH10170.2"/>
    <property type="molecule type" value="mRNA"/>
</dbReference>
<dbReference type="EMBL" id="BC020247">
    <property type="protein sequence ID" value="AAH20247.1"/>
    <property type="molecule type" value="mRNA"/>
</dbReference>
<dbReference type="CCDS" id="CCDS12426.1"/>
<dbReference type="RefSeq" id="NP_001287907.1">
    <property type="nucleotide sequence ID" value="NM_001300978.1"/>
</dbReference>
<dbReference type="RefSeq" id="NP_689479.1">
    <property type="nucleotide sequence ID" value="NM_152266.5"/>
</dbReference>
<dbReference type="PDB" id="2LYH">
    <property type="method" value="NMR"/>
    <property type="chains" value="A=139-215"/>
</dbReference>
<dbReference type="PDB" id="2M9M">
    <property type="method" value="NMR"/>
    <property type="chains" value="A=1-139"/>
</dbReference>
<dbReference type="PDB" id="2M9N">
    <property type="method" value="NMR"/>
    <property type="chains" value="A=155-215"/>
</dbReference>
<dbReference type="PDB" id="4BXO">
    <property type="method" value="X-ray"/>
    <property type="resolution" value="2.15 A"/>
    <property type="chains" value="B=1-214"/>
</dbReference>
<dbReference type="PDB" id="4M6W">
    <property type="method" value="X-ray"/>
    <property type="resolution" value="2.90 A"/>
    <property type="chains" value="B=17-215"/>
</dbReference>
<dbReference type="PDBsum" id="2LYH"/>
<dbReference type="PDBsum" id="2M9M"/>
<dbReference type="PDBsum" id="2M9N"/>
<dbReference type="PDBsum" id="4BXO"/>
<dbReference type="PDBsum" id="4M6W"/>
<dbReference type="BMRB" id="Q9BTP7"/>
<dbReference type="SMR" id="Q9BTP7"/>
<dbReference type="BioGRID" id="124833">
    <property type="interactions" value="26"/>
</dbReference>
<dbReference type="ComplexPortal" id="CPX-6266">
    <property type="entry name" value="Fanconi anemia FANCM-FAAP24-MHF anchoring complex"/>
</dbReference>
<dbReference type="CORUM" id="Q9BTP7"/>
<dbReference type="DIP" id="DIP-50466N"/>
<dbReference type="FunCoup" id="Q9BTP7">
    <property type="interactions" value="2483"/>
</dbReference>
<dbReference type="IntAct" id="Q9BTP7">
    <property type="interactions" value="9"/>
</dbReference>
<dbReference type="STRING" id="9606.ENSP00000466121"/>
<dbReference type="GlyGen" id="Q9BTP7">
    <property type="glycosylation" value="1 site, 1 O-linked glycan (1 site)"/>
</dbReference>
<dbReference type="iPTMnet" id="Q9BTP7"/>
<dbReference type="PhosphoSitePlus" id="Q9BTP7"/>
<dbReference type="BioMuta" id="FAAP24"/>
<dbReference type="DMDM" id="74733136"/>
<dbReference type="jPOST" id="Q9BTP7"/>
<dbReference type="MassIVE" id="Q9BTP7"/>
<dbReference type="PaxDb" id="9606-ENSP00000466121"/>
<dbReference type="PeptideAtlas" id="Q9BTP7"/>
<dbReference type="ProteomicsDB" id="79004"/>
<dbReference type="Pumba" id="Q9BTP7"/>
<dbReference type="Antibodypedia" id="47946">
    <property type="antibodies" value="35 antibodies from 13 providers"/>
</dbReference>
<dbReference type="DNASU" id="91442"/>
<dbReference type="Ensembl" id="ENST00000588258.6">
    <property type="protein sequence ID" value="ENSP00000466121.1"/>
    <property type="gene ID" value="ENSG00000131944.11"/>
</dbReference>
<dbReference type="Ensembl" id="ENST00000590281.1">
    <property type="protein sequence ID" value="ENSP00000468475.1"/>
    <property type="gene ID" value="ENSG00000131944.11"/>
</dbReference>
<dbReference type="Ensembl" id="ENST00000699960.1">
    <property type="protein sequence ID" value="ENSP00000514718.1"/>
    <property type="gene ID" value="ENSG00000131944.11"/>
</dbReference>
<dbReference type="GeneID" id="91442"/>
<dbReference type="KEGG" id="hsa:91442"/>
<dbReference type="MANE-Select" id="ENST00000588258.6">
    <property type="protein sequence ID" value="ENSP00000466121.1"/>
    <property type="RefSeq nucleotide sequence ID" value="NM_152266.5"/>
    <property type="RefSeq protein sequence ID" value="NP_689479.1"/>
</dbReference>
<dbReference type="UCSC" id="uc002nud.5">
    <property type="organism name" value="human"/>
</dbReference>
<dbReference type="AGR" id="HGNC:28467"/>
<dbReference type="CTD" id="91442"/>
<dbReference type="DisGeNET" id="91442"/>
<dbReference type="GeneCards" id="FAAP24"/>
<dbReference type="HGNC" id="HGNC:28467">
    <property type="gene designation" value="FAAP24"/>
</dbReference>
<dbReference type="HPA" id="ENSG00000131944">
    <property type="expression patterns" value="Low tissue specificity"/>
</dbReference>
<dbReference type="MalaCards" id="FAAP24"/>
<dbReference type="MIM" id="610884">
    <property type="type" value="gene"/>
</dbReference>
<dbReference type="neXtProt" id="NX_Q9BTP7"/>
<dbReference type="OpenTargets" id="ENSG00000131944"/>
<dbReference type="PharmGKB" id="PA144596473"/>
<dbReference type="VEuPathDB" id="HostDB:ENSG00000131944"/>
<dbReference type="eggNOG" id="KOG2841">
    <property type="taxonomic scope" value="Eukaryota"/>
</dbReference>
<dbReference type="GeneTree" id="ENSGT00390000009456"/>
<dbReference type="HOGENOM" id="CLU_111628_0_0_1"/>
<dbReference type="InParanoid" id="Q9BTP7"/>
<dbReference type="OMA" id="GPVHVPF"/>
<dbReference type="OrthoDB" id="5975714at2759"/>
<dbReference type="PAN-GO" id="Q9BTP7">
    <property type="GO annotations" value="2 GO annotations based on evolutionary models"/>
</dbReference>
<dbReference type="PhylomeDB" id="Q9BTP7"/>
<dbReference type="PathwayCommons" id="Q9BTP7"/>
<dbReference type="Reactome" id="R-HSA-6783310">
    <property type="pathway name" value="Fanconi Anemia Pathway"/>
</dbReference>
<dbReference type="Reactome" id="R-HSA-9833482">
    <property type="pathway name" value="PKR-mediated signaling"/>
</dbReference>
<dbReference type="SignaLink" id="Q9BTP7"/>
<dbReference type="SIGNOR" id="Q9BTP7"/>
<dbReference type="BioGRID-ORCS" id="91442">
    <property type="hits" value="134 hits in 1130 CRISPR screens"/>
</dbReference>
<dbReference type="EvolutionaryTrace" id="Q9BTP7"/>
<dbReference type="GenomeRNAi" id="91442"/>
<dbReference type="Pharos" id="Q9BTP7">
    <property type="development level" value="Tbio"/>
</dbReference>
<dbReference type="PRO" id="PR:Q9BTP7"/>
<dbReference type="Proteomes" id="UP000005640">
    <property type="component" value="Chromosome 19"/>
</dbReference>
<dbReference type="RNAct" id="Q9BTP7">
    <property type="molecule type" value="protein"/>
</dbReference>
<dbReference type="Bgee" id="ENSG00000131944">
    <property type="expression patterns" value="Expressed in buccal mucosa cell and 157 other cell types or tissues"/>
</dbReference>
<dbReference type="ExpressionAtlas" id="Q9BTP7">
    <property type="expression patterns" value="baseline and differential"/>
</dbReference>
<dbReference type="GO" id="GO:0000785">
    <property type="term" value="C:chromatin"/>
    <property type="evidence" value="ECO:0000314"/>
    <property type="project" value="ComplexPortal"/>
</dbReference>
<dbReference type="GO" id="GO:0005829">
    <property type="term" value="C:cytosol"/>
    <property type="evidence" value="ECO:0000304"/>
    <property type="project" value="Reactome"/>
</dbReference>
<dbReference type="GO" id="GO:0071821">
    <property type="term" value="C:FANCM-MHF complex"/>
    <property type="evidence" value="ECO:0000353"/>
    <property type="project" value="ComplexPortal"/>
</dbReference>
<dbReference type="GO" id="GO:0043240">
    <property type="term" value="C:Fanconi anaemia nuclear complex"/>
    <property type="evidence" value="ECO:0000314"/>
    <property type="project" value="UniProtKB"/>
</dbReference>
<dbReference type="GO" id="GO:0043231">
    <property type="term" value="C:intracellular membrane-bounded organelle"/>
    <property type="evidence" value="ECO:0000314"/>
    <property type="project" value="HPA"/>
</dbReference>
<dbReference type="GO" id="GO:0005654">
    <property type="term" value="C:nucleoplasm"/>
    <property type="evidence" value="ECO:0000314"/>
    <property type="project" value="HPA"/>
</dbReference>
<dbReference type="GO" id="GO:0003682">
    <property type="term" value="F:chromatin binding"/>
    <property type="evidence" value="ECO:0000314"/>
    <property type="project" value="UniProtKB"/>
</dbReference>
<dbReference type="GO" id="GO:0003677">
    <property type="term" value="F:DNA binding"/>
    <property type="evidence" value="ECO:0007669"/>
    <property type="project" value="UniProtKB-KW"/>
</dbReference>
<dbReference type="GO" id="GO:0036297">
    <property type="term" value="P:interstrand cross-link repair"/>
    <property type="evidence" value="ECO:0000314"/>
    <property type="project" value="ComplexPortal"/>
</dbReference>
<dbReference type="CDD" id="cd20076">
    <property type="entry name" value="XPF_nuclease_FAAP24"/>
    <property type="match status" value="1"/>
</dbReference>
<dbReference type="FunFam" id="1.10.150.20:FF:000046">
    <property type="entry name" value="Fanconi anemia core complex-associated protein 24"/>
    <property type="match status" value="1"/>
</dbReference>
<dbReference type="FunFam" id="3.40.50.10130:FF:000006">
    <property type="entry name" value="Fanconi anemia core complex-associated protein 24"/>
    <property type="match status" value="1"/>
</dbReference>
<dbReference type="Gene3D" id="3.40.50.10130">
    <property type="match status" value="1"/>
</dbReference>
<dbReference type="Gene3D" id="1.10.150.20">
    <property type="entry name" value="5' to 3' exonuclease, C-terminal subdomain"/>
    <property type="match status" value="1"/>
</dbReference>
<dbReference type="InterPro" id="IPR041663">
    <property type="entry name" value="DisA/LigA_HHH"/>
</dbReference>
<dbReference type="InterPro" id="IPR026985">
    <property type="entry name" value="FAAP24"/>
</dbReference>
<dbReference type="InterPro" id="IPR040646">
    <property type="entry name" value="PND"/>
</dbReference>
<dbReference type="InterPro" id="IPR010994">
    <property type="entry name" value="RuvA_2-like"/>
</dbReference>
<dbReference type="PANTHER" id="PTHR31786">
    <property type="entry name" value="FANCONI ANEMIA CORE COMPLEX-ASSOCIATED PROTEIN 24"/>
    <property type="match status" value="1"/>
</dbReference>
<dbReference type="PANTHER" id="PTHR31786:SF2">
    <property type="entry name" value="FANCONI ANEMIA CORE COMPLEX-ASSOCIATED PROTEIN 24"/>
    <property type="match status" value="1"/>
</dbReference>
<dbReference type="Pfam" id="PF12826">
    <property type="entry name" value="HHH_2"/>
    <property type="match status" value="1"/>
</dbReference>
<dbReference type="Pfam" id="PF17949">
    <property type="entry name" value="PND"/>
    <property type="match status" value="1"/>
</dbReference>
<dbReference type="SUPFAM" id="SSF47781">
    <property type="entry name" value="RuvA domain 2-like"/>
    <property type="match status" value="1"/>
</dbReference>
<feature type="chain" id="PRO_0000270961" description="Fanconi anemia core complex-associated protein 24">
    <location>
        <begin position="1"/>
        <end position="215"/>
    </location>
</feature>
<feature type="region of interest" description="RuvA domain 2-like">
    <location>
        <begin position="160"/>
        <end position="215"/>
    </location>
</feature>
<feature type="sequence variant" id="VAR_050989" description="In dbSNP:rs36017455.">
    <original>S</original>
    <variation>F</variation>
    <location>
        <position position="126"/>
    </location>
</feature>
<feature type="sequence variant" id="VAR_029828" description="In dbSNP:rs2304103.">
    <original>S</original>
    <variation>L</variation>
    <location>
        <position position="158"/>
    </location>
</feature>
<feature type="sequence variant" id="VAR_029829" description="In dbSNP:rs3816032.">
    <original>I</original>
    <variation>T</variation>
    <location>
        <position position="192"/>
    </location>
</feature>
<feature type="strand" evidence="5">
    <location>
        <begin position="15"/>
        <end position="17"/>
    </location>
</feature>
<feature type="strand" evidence="6">
    <location>
        <begin position="18"/>
        <end position="22"/>
    </location>
</feature>
<feature type="helix" evidence="6">
    <location>
        <begin position="23"/>
        <end position="25"/>
    </location>
</feature>
<feature type="helix" evidence="6">
    <location>
        <begin position="29"/>
        <end position="35"/>
    </location>
</feature>
<feature type="strand" evidence="6">
    <location>
        <begin position="38"/>
        <end position="45"/>
    </location>
</feature>
<feature type="strand" evidence="6">
    <location>
        <begin position="47"/>
        <end position="61"/>
    </location>
</feature>
<feature type="helix" evidence="6">
    <location>
        <begin position="63"/>
        <end position="68"/>
    </location>
</feature>
<feature type="helix" evidence="6">
    <location>
        <begin position="73"/>
        <end position="80"/>
    </location>
</feature>
<feature type="strand" evidence="7">
    <location>
        <begin position="82"/>
        <end position="84"/>
    </location>
</feature>
<feature type="strand" evidence="6">
    <location>
        <begin position="86"/>
        <end position="92"/>
    </location>
</feature>
<feature type="turn" evidence="6">
    <location>
        <begin position="95"/>
        <end position="97"/>
    </location>
</feature>
<feature type="helix" evidence="6">
    <location>
        <begin position="98"/>
        <end position="100"/>
    </location>
</feature>
<feature type="helix" evidence="6">
    <location>
        <begin position="101"/>
        <end position="109"/>
    </location>
</feature>
<feature type="strand" evidence="6">
    <location>
        <begin position="115"/>
        <end position="121"/>
    </location>
</feature>
<feature type="helix" evidence="6">
    <location>
        <begin position="122"/>
        <end position="137"/>
    </location>
</feature>
<feature type="helix" evidence="6">
    <location>
        <begin position="140"/>
        <end position="142"/>
    </location>
</feature>
<feature type="helix" evidence="6">
    <location>
        <begin position="156"/>
        <end position="163"/>
    </location>
</feature>
<feature type="turn" evidence="4">
    <location>
        <begin position="167"/>
        <end position="169"/>
    </location>
</feature>
<feature type="helix" evidence="6">
    <location>
        <begin position="173"/>
        <end position="180"/>
    </location>
</feature>
<feature type="strand" evidence="4">
    <location>
        <begin position="181"/>
        <end position="183"/>
    </location>
</feature>
<feature type="helix" evidence="6">
    <location>
        <begin position="184"/>
        <end position="188"/>
    </location>
</feature>
<feature type="helix" evidence="6">
    <location>
        <begin position="192"/>
        <end position="195"/>
    </location>
</feature>
<feature type="turn" evidence="6">
    <location>
        <begin position="196"/>
        <end position="198"/>
    </location>
</feature>
<feature type="helix" evidence="6">
    <location>
        <begin position="201"/>
        <end position="212"/>
    </location>
</feature>
<comment type="function">
    <text evidence="1">Plays a role in DNA repair through recruitment of the FA core complex to damaged DNA. Regulates FANCD2 monoubiquitination upon DNA damage. Induces chromosomal instability as well as hypersensitivity to DNA cross-linking agents, when repressed. Targets FANCM/FAAP24 complex to the DNA, preferentially to single strand DNA.</text>
</comment>
<comment type="subunit">
    <text evidence="1">Belongs to the multisubunit FA complex composed of FANCA, FANCB, FANCC, FANCE, FANCF, FANCG, FANCL/PHF9, FANCM and FAAP24. Interacts with FANCM.</text>
</comment>
<comment type="interaction">
    <interactant intactId="EBI-1045650">
        <id>Q9BTP7</id>
    </interactant>
    <interactant intactId="EBI-3957237">
        <id>Q8IYD8</id>
        <label>FANCM</label>
    </interactant>
    <organismsDiffer>false</organismsDiffer>
    <experiments>12</experiments>
</comment>
<comment type="interaction">
    <interactant intactId="EBI-1045650">
        <id>Q9BTP7</id>
    </interactant>
    <interactant intactId="EBI-16067666">
        <id>Q8IYD8-1</id>
        <label>FANCM</label>
    </interactant>
    <organismsDiffer>false</organismsDiffer>
    <experiments>2</experiments>
</comment>
<comment type="subcellular location">
    <subcellularLocation>
        <location evidence="1">Nucleus</location>
    </subcellularLocation>
</comment>
<comment type="domain">
    <text>The C-terminal region is distantly related to RuvA domain 2, a DNA-binding domain.</text>
</comment>
<organism>
    <name type="scientific">Homo sapiens</name>
    <name type="common">Human</name>
    <dbReference type="NCBI Taxonomy" id="9606"/>
    <lineage>
        <taxon>Eukaryota</taxon>
        <taxon>Metazoa</taxon>
        <taxon>Chordata</taxon>
        <taxon>Craniata</taxon>
        <taxon>Vertebrata</taxon>
        <taxon>Euteleostomi</taxon>
        <taxon>Mammalia</taxon>
        <taxon>Eutheria</taxon>
        <taxon>Euarchontoglires</taxon>
        <taxon>Primates</taxon>
        <taxon>Haplorrhini</taxon>
        <taxon>Catarrhini</taxon>
        <taxon>Hominidae</taxon>
        <taxon>Homo</taxon>
    </lineage>
</organism>
<proteinExistence type="evidence at protein level"/>
<protein>
    <recommendedName>
        <fullName evidence="2 3">Fanconi anemia core complex-associated protein 24</fullName>
    </recommendedName>
    <alternativeName>
        <fullName>Fanconi anemia-associated protein of 24 kDa</fullName>
    </alternativeName>
</protein>
<sequence>MEKNPPDDTGPVHVPLGHIVANEKWRGSQLAQEMQGKIKLIFEDGLTPDFYLSNRCCILYVTEADLVAGNGYRKRLVRVRNSNNLKGIVVVEKTRMSEQYFPALQKFTVLDLGMVLLPVASQMEASCLVIQLVQEQTKEPSKNPLLGKKRALLLSEPSLLRTVQQIPGVGKVKAPLLLQKFPSIQQLSNASIGELEQVVGQAVAQQIHAFFTQPR</sequence>